<accession>A5TY79</accession>
<accession>O08154</accession>
<accession>O08156</accession>
<accession>O08159</accession>
<accession>O33355</accession>
<accession>P19774</accession>
<accession>P75029</accession>
<accession>P97137</accession>
<accession>Q9R378</accession>
<evidence type="ECO:0000250" key="1"/>
<evidence type="ECO:0000255" key="2">
    <source>
        <dbReference type="PROSITE-ProRule" id="PRU00457"/>
    </source>
</evidence>
<evidence type="ECO:0000305" key="3"/>
<sequence length="278" mass="31369">MPIAPSTYYDHINREPSRRELRDGELKEHISRVHAANYGVYGARKVWLTLNREGIEVARCTVERLMTKLGLSGTTRGKARRTTIADPATARPADLVQRRFGPPAPNRLWVADLTYVSTWAGFAYVAFVTDAYARRILGWRVASTMATSMVLDAIEQAIWTRQQEGVLDLKDVIHHTDRGSQYTSIRFSERLAEAGIQPSVGAVGSSYDNALAETINGLYKTELIKPGKPWRSIEDVELATARWVDWFNHRRLYQYCGDVPPVELEAAYYAQRQRPAAG</sequence>
<reference key="1">
    <citation type="journal article" date="1999" name="Infect. Immun.">
        <title>Genomic analysis reveals variation between Mycobacterium tuberculosis H37Rv and the attenuated M. tuberculosis H37Ra.</title>
        <authorList>
            <person name="Brosch R."/>
            <person name="Philipp W."/>
            <person name="Stavropoulos E."/>
            <person name="Colston M.J."/>
            <person name="Cole S.T."/>
            <person name="Gordon S.V."/>
        </authorList>
    </citation>
    <scope>NUCLEOTIDE SEQUENCE [GENOMIC DNA]</scope>
</reference>
<reference key="2">
    <citation type="journal article" date="2008" name="PLoS ONE">
        <title>Genetic basis of virulence attenuation revealed by comparative genomic analysis of Mycobacterium tuberculosis strain H37Ra versus H37Rv.</title>
        <authorList>
            <person name="Zheng H."/>
            <person name="Lu L."/>
            <person name="Wang B."/>
            <person name="Pu S."/>
            <person name="Zhang X."/>
            <person name="Zhu G."/>
            <person name="Shi W."/>
            <person name="Zhang L."/>
            <person name="Wang H."/>
            <person name="Wang S."/>
            <person name="Zhao G."/>
            <person name="Zhang Y."/>
        </authorList>
    </citation>
    <scope>NUCLEOTIDE SEQUENCE [LARGE SCALE GENOMIC DNA]</scope>
    <source>
        <strain>ATCC 25177 / H37Ra</strain>
    </source>
</reference>
<protein>
    <recommendedName>
        <fullName>Putative transposase for insertion sequence element IS986/IS6110</fullName>
    </recommendedName>
    <alternativeName>
        <fullName>ORFB</fullName>
    </alternativeName>
</protein>
<feature type="chain" id="PRO_0000305176" description="Putative transposase for insertion sequence element IS986/IS6110">
    <location>
        <begin position="1"/>
        <end position="278"/>
    </location>
</feature>
<feature type="domain" description="Integrase catalytic" evidence="2">
    <location>
        <begin position="101"/>
        <end position="268"/>
    </location>
</feature>
<feature type="sequence conflict" description="In Ref. 1; CAB62397/CAB60074." evidence="3" ref="1">
    <original>G</original>
    <variation>S</variation>
    <location>
        <position position="165"/>
    </location>
</feature>
<proteinExistence type="inferred from homology"/>
<organism>
    <name type="scientific">Mycobacterium tuberculosis (strain ATCC 25177 / H37Ra)</name>
    <dbReference type="NCBI Taxonomy" id="419947"/>
    <lineage>
        <taxon>Bacteria</taxon>
        <taxon>Bacillati</taxon>
        <taxon>Actinomycetota</taxon>
        <taxon>Actinomycetes</taxon>
        <taxon>Mycobacteriales</taxon>
        <taxon>Mycobacteriaceae</taxon>
        <taxon>Mycobacterium</taxon>
        <taxon>Mycobacterium tuberculosis complex</taxon>
    </lineage>
</organism>
<comment type="function">
    <text evidence="1">Involved in the transposition of the insertion sequence.</text>
</comment>
<comment type="sequence caution" evidence="3">
    <conflict type="erroneous initiation">
        <sequence resource="EMBL-CDS" id="ABQ71729"/>
    </conflict>
</comment>
<comment type="sequence caution" evidence="3">
    <conflict type="erroneous initiation">
        <sequence resource="EMBL-CDS" id="ABQ72535"/>
    </conflict>
</comment>
<comment type="sequence caution" evidence="3">
    <conflict type="erroneous initiation">
        <sequence resource="EMBL-CDS" id="ABQ73121"/>
    </conflict>
</comment>
<comment type="sequence caution" evidence="3">
    <conflict type="erroneous initiation">
        <sequence resource="EMBL-CDS" id="ABQ73516"/>
    </conflict>
</comment>
<comment type="sequence caution" evidence="3">
    <conflict type="erroneous initiation">
        <sequence resource="EMBL-CDS" id="ABQ73522"/>
    </conflict>
</comment>
<comment type="sequence caution" evidence="3">
    <conflict type="erroneous initiation">
        <sequence resource="EMBL-CDS" id="ABQ73531"/>
    </conflict>
</comment>
<comment type="sequence caution" evidence="3">
    <conflict type="erroneous initiation">
        <sequence resource="EMBL-CDS" id="ABQ73882"/>
    </conflict>
</comment>
<comment type="sequence caution" evidence="3">
    <conflict type="erroneous initiation">
        <sequence resource="EMBL-CDS" id="ABQ73944"/>
    </conflict>
</comment>
<comment type="sequence caution" evidence="3">
    <conflict type="erroneous initiation">
        <sequence resource="EMBL-CDS" id="ABQ74062"/>
    </conflict>
</comment>
<comment type="sequence caution" evidence="3">
    <conflict type="erroneous initiation">
        <sequence resource="EMBL-CDS" id="ABQ74148"/>
    </conflict>
</comment>
<comment type="sequence caution" evidence="3">
    <conflict type="erroneous initiation">
        <sequence resource="EMBL-CDS" id="ABQ74275"/>
    </conflict>
</comment>
<comment type="sequence caution" evidence="3">
    <conflict type="erroneous initiation">
        <sequence resource="EMBL-CDS" id="ABQ74617"/>
    </conflict>
</comment>
<comment type="sequence caution" evidence="3">
    <conflict type="erroneous initiation">
        <sequence resource="EMBL-CDS" id="ABQ75002"/>
    </conflict>
</comment>
<comment type="sequence caution" evidence="3">
    <conflict type="erroneous initiation">
        <sequence resource="EMBL-CDS" id="ABQ75151"/>
    </conflict>
</comment>
<comment type="sequence caution" evidence="3">
    <conflict type="erroneous initiation">
        <sequence resource="EMBL-CDS" id="ABQ75204"/>
    </conflict>
</comment>
<comment type="sequence caution" evidence="3">
    <conflict type="erroneous initiation">
        <sequence resource="EMBL-CDS" id="ABQ75300"/>
    </conflict>
</comment>
<comment type="sequence caution" evidence="3">
    <conflict type="erroneous initiation">
        <sequence resource="EMBL-CDS" id="CAB60067"/>
    </conflict>
</comment>
<comment type="sequence caution" evidence="3">
    <conflict type="erroneous initiation">
        <sequence resource="EMBL-CDS" id="CAB60074"/>
    </conflict>
</comment>
<comment type="sequence caution" evidence="3">
    <conflict type="erroneous initiation">
        <sequence resource="EMBL-CDS" id="CAB62397"/>
    </conflict>
</comment>
<gene>
    <name type="ordered locus">MRA_0011</name>
</gene>
<gene>
    <name type="ordered locus">MRA_0806</name>
</gene>
<gene>
    <name type="ordered locus">MRA_1379</name>
</gene>
<gene>
    <name type="ordered locus">MRA_1767</name>
</gene>
<gene>
    <name type="ordered locus">MRA_1769</name>
</gene>
<gene>
    <name type="ordered locus">MRA_1778</name>
</gene>
<gene>
    <name type="ordered locus">MRA_2121</name>
</gene>
<gene>
    <name type="ordered locus">MRA_2182</name>
</gene>
<gene>
    <name type="ordered locus">MRA_2298</name>
</gene>
<gene>
    <name type="ordered locus">MRA_2379</name>
</gene>
<gene>
    <name type="ordered locus">MRA_2504</name>
</gene>
<gene>
    <name type="ordered locus">MRA_2838</name>
</gene>
<gene>
    <name type="ordered locus">MRA_3219</name>
</gene>
<gene>
    <name type="ordered locus">MRA_3368</name>
</gene>
<gene>
    <name type="ordered locus">MRA_3420</name>
</gene>
<gene>
    <name type="ordered locus">MRA_3515</name>
</gene>
<dbReference type="EMBL" id="AJ242908">
    <property type="protein sequence ID" value="CAB62397.1"/>
    <property type="status" value="ALT_INIT"/>
    <property type="molecule type" value="Genomic_DNA"/>
</dbReference>
<dbReference type="EMBL" id="AJ242907">
    <property type="protein sequence ID" value="CAB60074.1"/>
    <property type="status" value="ALT_INIT"/>
    <property type="molecule type" value="Genomic_DNA"/>
</dbReference>
<dbReference type="EMBL" id="AJ242907">
    <property type="protein sequence ID" value="CAB60067.1"/>
    <property type="status" value="ALT_INIT"/>
    <property type="molecule type" value="Genomic_DNA"/>
</dbReference>
<dbReference type="EMBL" id="CP000611">
    <property type="protein sequence ID" value="ABQ71729.1"/>
    <property type="status" value="ALT_INIT"/>
    <property type="molecule type" value="Genomic_DNA"/>
</dbReference>
<dbReference type="EMBL" id="CP000611">
    <property type="protein sequence ID" value="ABQ72535.1"/>
    <property type="status" value="ALT_INIT"/>
    <property type="molecule type" value="Genomic_DNA"/>
</dbReference>
<dbReference type="EMBL" id="CP000611">
    <property type="protein sequence ID" value="ABQ73121.1"/>
    <property type="status" value="ALT_INIT"/>
    <property type="molecule type" value="Genomic_DNA"/>
</dbReference>
<dbReference type="EMBL" id="CP000611">
    <property type="protein sequence ID" value="ABQ73516.1"/>
    <property type="status" value="ALT_INIT"/>
    <property type="molecule type" value="Genomic_DNA"/>
</dbReference>
<dbReference type="EMBL" id="CP000611">
    <property type="protein sequence ID" value="ABQ73522.1"/>
    <property type="status" value="ALT_INIT"/>
    <property type="molecule type" value="Genomic_DNA"/>
</dbReference>
<dbReference type="EMBL" id="CP000611">
    <property type="protein sequence ID" value="ABQ73531.1"/>
    <property type="status" value="ALT_INIT"/>
    <property type="molecule type" value="Genomic_DNA"/>
</dbReference>
<dbReference type="EMBL" id="CP000611">
    <property type="protein sequence ID" value="ABQ73882.1"/>
    <property type="status" value="ALT_INIT"/>
    <property type="molecule type" value="Genomic_DNA"/>
</dbReference>
<dbReference type="EMBL" id="CP000611">
    <property type="protein sequence ID" value="ABQ73944.1"/>
    <property type="status" value="ALT_INIT"/>
    <property type="molecule type" value="Genomic_DNA"/>
</dbReference>
<dbReference type="EMBL" id="CP000611">
    <property type="protein sequence ID" value="ABQ74062.1"/>
    <property type="status" value="ALT_INIT"/>
    <property type="molecule type" value="Genomic_DNA"/>
</dbReference>
<dbReference type="EMBL" id="CP000611">
    <property type="protein sequence ID" value="ABQ74148.1"/>
    <property type="status" value="ALT_INIT"/>
    <property type="molecule type" value="Genomic_DNA"/>
</dbReference>
<dbReference type="EMBL" id="CP000611">
    <property type="protein sequence ID" value="ABQ74275.1"/>
    <property type="status" value="ALT_INIT"/>
    <property type="molecule type" value="Genomic_DNA"/>
</dbReference>
<dbReference type="EMBL" id="CP000611">
    <property type="protein sequence ID" value="ABQ74617.1"/>
    <property type="status" value="ALT_INIT"/>
    <property type="molecule type" value="Genomic_DNA"/>
</dbReference>
<dbReference type="EMBL" id="CP000611">
    <property type="protein sequence ID" value="ABQ75002.1"/>
    <property type="status" value="ALT_INIT"/>
    <property type="molecule type" value="Genomic_DNA"/>
</dbReference>
<dbReference type="EMBL" id="CP000611">
    <property type="protein sequence ID" value="ABQ75151.1"/>
    <property type="status" value="ALT_INIT"/>
    <property type="molecule type" value="Genomic_DNA"/>
</dbReference>
<dbReference type="EMBL" id="CP000611">
    <property type="protein sequence ID" value="ABQ75204.1"/>
    <property type="status" value="ALT_INIT"/>
    <property type="molecule type" value="Genomic_DNA"/>
</dbReference>
<dbReference type="EMBL" id="CP000611">
    <property type="protein sequence ID" value="ABQ75300.1"/>
    <property type="status" value="ALT_INIT"/>
    <property type="molecule type" value="Genomic_DNA"/>
</dbReference>
<dbReference type="SMR" id="A5TY79"/>
<dbReference type="KEGG" id="mra:MRA_0011"/>
<dbReference type="KEGG" id="mra:MRA_0806"/>
<dbReference type="KEGG" id="mra:MRA_1379"/>
<dbReference type="KEGG" id="mra:MRA_1767"/>
<dbReference type="KEGG" id="mra:MRA_1769"/>
<dbReference type="KEGG" id="mra:MRA_1778"/>
<dbReference type="KEGG" id="mra:MRA_2121"/>
<dbReference type="KEGG" id="mra:MRA_2182"/>
<dbReference type="KEGG" id="mra:MRA_2298"/>
<dbReference type="KEGG" id="mra:MRA_2379"/>
<dbReference type="KEGG" id="mra:MRA_2504"/>
<dbReference type="KEGG" id="mra:MRA_2838"/>
<dbReference type="KEGG" id="mra:MRA_3219"/>
<dbReference type="KEGG" id="mra:MRA_3368"/>
<dbReference type="KEGG" id="mra:MRA_3420"/>
<dbReference type="KEGG" id="mra:MRA_3515"/>
<dbReference type="eggNOG" id="COG2801">
    <property type="taxonomic scope" value="Bacteria"/>
</dbReference>
<dbReference type="HOGENOM" id="CLU_027402_4_0_11"/>
<dbReference type="Proteomes" id="UP000001988">
    <property type="component" value="Chromosome"/>
</dbReference>
<dbReference type="GO" id="GO:0003677">
    <property type="term" value="F:DNA binding"/>
    <property type="evidence" value="ECO:0007669"/>
    <property type="project" value="UniProtKB-KW"/>
</dbReference>
<dbReference type="GO" id="GO:0015074">
    <property type="term" value="P:DNA integration"/>
    <property type="evidence" value="ECO:0007669"/>
    <property type="project" value="InterPro"/>
</dbReference>
<dbReference type="GO" id="GO:0006310">
    <property type="term" value="P:DNA recombination"/>
    <property type="evidence" value="ECO:0007669"/>
    <property type="project" value="UniProtKB-KW"/>
</dbReference>
<dbReference type="GO" id="GO:0032196">
    <property type="term" value="P:transposition"/>
    <property type="evidence" value="ECO:0007669"/>
    <property type="project" value="UniProtKB-KW"/>
</dbReference>
<dbReference type="FunFam" id="3.30.420.10:FF:000111">
    <property type="entry name" value="IS3-like element IS987 family transposase"/>
    <property type="match status" value="1"/>
</dbReference>
<dbReference type="Gene3D" id="3.30.420.10">
    <property type="entry name" value="Ribonuclease H-like superfamily/Ribonuclease H"/>
    <property type="match status" value="1"/>
</dbReference>
<dbReference type="InterPro" id="IPR025948">
    <property type="entry name" value="HTH-like_dom"/>
</dbReference>
<dbReference type="InterPro" id="IPR001584">
    <property type="entry name" value="Integrase_cat-core"/>
</dbReference>
<dbReference type="InterPro" id="IPR012337">
    <property type="entry name" value="RNaseH-like_sf"/>
</dbReference>
<dbReference type="InterPro" id="IPR036397">
    <property type="entry name" value="RNaseH_sf"/>
</dbReference>
<dbReference type="InterPro" id="IPR048020">
    <property type="entry name" value="Transpos_IS3"/>
</dbReference>
<dbReference type="InterPro" id="IPR050900">
    <property type="entry name" value="Transposase_IS3/IS150/IS904"/>
</dbReference>
<dbReference type="NCBIfam" id="NF033516">
    <property type="entry name" value="transpos_IS3"/>
    <property type="match status" value="1"/>
</dbReference>
<dbReference type="PANTHER" id="PTHR46889">
    <property type="entry name" value="TRANSPOSASE INSF FOR INSERTION SEQUENCE IS3B-RELATED"/>
    <property type="match status" value="1"/>
</dbReference>
<dbReference type="PANTHER" id="PTHR46889:SF4">
    <property type="entry name" value="TRANSPOSASE INSO FOR INSERTION SEQUENCE ELEMENT IS911B-RELATED"/>
    <property type="match status" value="1"/>
</dbReference>
<dbReference type="Pfam" id="PF13276">
    <property type="entry name" value="HTH_21"/>
    <property type="match status" value="1"/>
</dbReference>
<dbReference type="Pfam" id="PF00665">
    <property type="entry name" value="rve"/>
    <property type="match status" value="1"/>
</dbReference>
<dbReference type="SUPFAM" id="SSF53098">
    <property type="entry name" value="Ribonuclease H-like"/>
    <property type="match status" value="1"/>
</dbReference>
<dbReference type="PROSITE" id="PS50994">
    <property type="entry name" value="INTEGRASE"/>
    <property type="match status" value="1"/>
</dbReference>
<keyword id="KW-0233">DNA recombination</keyword>
<keyword id="KW-0238">DNA-binding</keyword>
<keyword id="KW-1185">Reference proteome</keyword>
<keyword id="KW-0814">Transposable element</keyword>
<keyword id="KW-0815">Transposition</keyword>
<name>TRA9_MYCTA</name>